<evidence type="ECO:0000255" key="1">
    <source>
        <dbReference type="HAMAP-Rule" id="MF_01405"/>
    </source>
</evidence>
<evidence type="ECO:0000305" key="2"/>
<organism>
    <name type="scientific">Xanthomonas campestris pv. campestris (strain 8004)</name>
    <dbReference type="NCBI Taxonomy" id="314565"/>
    <lineage>
        <taxon>Bacteria</taxon>
        <taxon>Pseudomonadati</taxon>
        <taxon>Pseudomonadota</taxon>
        <taxon>Gammaproteobacteria</taxon>
        <taxon>Lysobacterales</taxon>
        <taxon>Lysobacteraceae</taxon>
        <taxon>Xanthomonas</taxon>
    </lineage>
</organism>
<comment type="function">
    <text evidence="1">Pyrophosphatase that catalyzes the hydrolysis of nucleoside triphosphates to their monophosphate derivatives, with a high preference for the non-canonical purine nucleotides XTP (xanthosine triphosphate), dITP (deoxyinosine triphosphate) and ITP. Seems to function as a house-cleaning enzyme that removes non-canonical purine nucleotides from the nucleotide pool, thus preventing their incorporation into DNA/RNA and avoiding chromosomal lesions.</text>
</comment>
<comment type="catalytic activity">
    <reaction evidence="1">
        <text>XTP + H2O = XMP + diphosphate + H(+)</text>
        <dbReference type="Rhea" id="RHEA:28610"/>
        <dbReference type="ChEBI" id="CHEBI:15377"/>
        <dbReference type="ChEBI" id="CHEBI:15378"/>
        <dbReference type="ChEBI" id="CHEBI:33019"/>
        <dbReference type="ChEBI" id="CHEBI:57464"/>
        <dbReference type="ChEBI" id="CHEBI:61314"/>
        <dbReference type="EC" id="3.6.1.66"/>
    </reaction>
</comment>
<comment type="catalytic activity">
    <reaction evidence="1">
        <text>dITP + H2O = dIMP + diphosphate + H(+)</text>
        <dbReference type="Rhea" id="RHEA:28342"/>
        <dbReference type="ChEBI" id="CHEBI:15377"/>
        <dbReference type="ChEBI" id="CHEBI:15378"/>
        <dbReference type="ChEBI" id="CHEBI:33019"/>
        <dbReference type="ChEBI" id="CHEBI:61194"/>
        <dbReference type="ChEBI" id="CHEBI:61382"/>
        <dbReference type="EC" id="3.6.1.66"/>
    </reaction>
</comment>
<comment type="catalytic activity">
    <reaction evidence="1">
        <text>ITP + H2O = IMP + diphosphate + H(+)</text>
        <dbReference type="Rhea" id="RHEA:29399"/>
        <dbReference type="ChEBI" id="CHEBI:15377"/>
        <dbReference type="ChEBI" id="CHEBI:15378"/>
        <dbReference type="ChEBI" id="CHEBI:33019"/>
        <dbReference type="ChEBI" id="CHEBI:58053"/>
        <dbReference type="ChEBI" id="CHEBI:61402"/>
        <dbReference type="EC" id="3.6.1.66"/>
    </reaction>
</comment>
<comment type="cofactor">
    <cofactor evidence="1">
        <name>Mg(2+)</name>
        <dbReference type="ChEBI" id="CHEBI:18420"/>
    </cofactor>
    <text evidence="1">Binds 1 Mg(2+) ion per subunit.</text>
</comment>
<comment type="subunit">
    <text evidence="1">Homodimer.</text>
</comment>
<comment type="similarity">
    <text evidence="1">Belongs to the HAM1 NTPase family.</text>
</comment>
<comment type="sequence caution" evidence="2">
    <conflict type="erroneous initiation">
        <sequence resource="EMBL-CDS" id="AAY48036"/>
    </conflict>
    <text>Extended N-terminus.</text>
</comment>
<dbReference type="EC" id="3.6.1.66" evidence="1"/>
<dbReference type="EMBL" id="CP000050">
    <property type="protein sequence ID" value="AAY48036.1"/>
    <property type="status" value="ALT_INIT"/>
    <property type="molecule type" value="Genomic_DNA"/>
</dbReference>
<dbReference type="SMR" id="Q4UY37"/>
<dbReference type="KEGG" id="xcb:XC_0962"/>
<dbReference type="HOGENOM" id="CLU_082080_0_3_6"/>
<dbReference type="Proteomes" id="UP000000420">
    <property type="component" value="Chromosome"/>
</dbReference>
<dbReference type="GO" id="GO:0005829">
    <property type="term" value="C:cytosol"/>
    <property type="evidence" value="ECO:0007669"/>
    <property type="project" value="TreeGrafter"/>
</dbReference>
<dbReference type="GO" id="GO:0035870">
    <property type="term" value="F:dITP diphosphatase activity"/>
    <property type="evidence" value="ECO:0007669"/>
    <property type="project" value="RHEA"/>
</dbReference>
<dbReference type="GO" id="GO:0036220">
    <property type="term" value="F:ITP diphosphatase activity"/>
    <property type="evidence" value="ECO:0007669"/>
    <property type="project" value="UniProtKB-EC"/>
</dbReference>
<dbReference type="GO" id="GO:0046872">
    <property type="term" value="F:metal ion binding"/>
    <property type="evidence" value="ECO:0007669"/>
    <property type="project" value="UniProtKB-KW"/>
</dbReference>
<dbReference type="GO" id="GO:0000166">
    <property type="term" value="F:nucleotide binding"/>
    <property type="evidence" value="ECO:0007669"/>
    <property type="project" value="UniProtKB-KW"/>
</dbReference>
<dbReference type="GO" id="GO:0017111">
    <property type="term" value="F:ribonucleoside triphosphate phosphatase activity"/>
    <property type="evidence" value="ECO:0007669"/>
    <property type="project" value="InterPro"/>
</dbReference>
<dbReference type="GO" id="GO:0036222">
    <property type="term" value="F:XTP diphosphatase activity"/>
    <property type="evidence" value="ECO:0007669"/>
    <property type="project" value="RHEA"/>
</dbReference>
<dbReference type="GO" id="GO:0009117">
    <property type="term" value="P:nucleotide metabolic process"/>
    <property type="evidence" value="ECO:0007669"/>
    <property type="project" value="UniProtKB-KW"/>
</dbReference>
<dbReference type="GO" id="GO:0009146">
    <property type="term" value="P:purine nucleoside triphosphate catabolic process"/>
    <property type="evidence" value="ECO:0007669"/>
    <property type="project" value="UniProtKB-UniRule"/>
</dbReference>
<dbReference type="CDD" id="cd00515">
    <property type="entry name" value="HAM1"/>
    <property type="match status" value="1"/>
</dbReference>
<dbReference type="FunFam" id="3.90.950.10:FF:000001">
    <property type="entry name" value="dITP/XTP pyrophosphatase"/>
    <property type="match status" value="1"/>
</dbReference>
<dbReference type="Gene3D" id="3.90.950.10">
    <property type="match status" value="1"/>
</dbReference>
<dbReference type="HAMAP" id="MF_01405">
    <property type="entry name" value="Non_canon_purine_NTPase"/>
    <property type="match status" value="1"/>
</dbReference>
<dbReference type="InterPro" id="IPR020922">
    <property type="entry name" value="dITP/XTP_pyrophosphatase"/>
</dbReference>
<dbReference type="InterPro" id="IPR029001">
    <property type="entry name" value="ITPase-like_fam"/>
</dbReference>
<dbReference type="InterPro" id="IPR002637">
    <property type="entry name" value="RdgB/HAM1"/>
</dbReference>
<dbReference type="NCBIfam" id="TIGR00042">
    <property type="entry name" value="RdgB/HAM1 family non-canonical purine NTP pyrophosphatase"/>
    <property type="match status" value="1"/>
</dbReference>
<dbReference type="PANTHER" id="PTHR11067:SF9">
    <property type="entry name" value="INOSINE TRIPHOSPHATE PYROPHOSPHATASE"/>
    <property type="match status" value="1"/>
</dbReference>
<dbReference type="PANTHER" id="PTHR11067">
    <property type="entry name" value="INOSINE TRIPHOSPHATE PYROPHOSPHATASE/HAM1 PROTEIN"/>
    <property type="match status" value="1"/>
</dbReference>
<dbReference type="Pfam" id="PF01725">
    <property type="entry name" value="Ham1p_like"/>
    <property type="match status" value="1"/>
</dbReference>
<dbReference type="SUPFAM" id="SSF52972">
    <property type="entry name" value="ITPase-like"/>
    <property type="match status" value="1"/>
</dbReference>
<accession>Q4UY37</accession>
<feature type="chain" id="PRO_1000087382" description="dITP/XTP pyrophosphatase">
    <location>
        <begin position="1"/>
        <end position="199"/>
    </location>
</feature>
<feature type="active site" description="Proton acceptor" evidence="1">
    <location>
        <position position="69"/>
    </location>
</feature>
<feature type="binding site" evidence="1">
    <location>
        <begin position="8"/>
        <end position="13"/>
    </location>
    <ligand>
        <name>substrate</name>
    </ligand>
</feature>
<feature type="binding site" evidence="1">
    <location>
        <position position="69"/>
    </location>
    <ligand>
        <name>Mg(2+)</name>
        <dbReference type="ChEBI" id="CHEBI:18420"/>
    </ligand>
</feature>
<feature type="binding site" evidence="1">
    <location>
        <position position="70"/>
    </location>
    <ligand>
        <name>substrate</name>
    </ligand>
</feature>
<feature type="binding site" evidence="1">
    <location>
        <begin position="154"/>
        <end position="157"/>
    </location>
    <ligand>
        <name>substrate</name>
    </ligand>
</feature>
<feature type="binding site" evidence="1">
    <location>
        <position position="177"/>
    </location>
    <ligand>
        <name>substrate</name>
    </ligand>
</feature>
<feature type="binding site" evidence="1">
    <location>
        <begin position="182"/>
        <end position="183"/>
    </location>
    <ligand>
        <name>substrate</name>
    </ligand>
</feature>
<reference key="1">
    <citation type="journal article" date="2005" name="Genome Res.">
        <title>Comparative and functional genomic analyses of the pathogenicity of phytopathogen Xanthomonas campestris pv. campestris.</title>
        <authorList>
            <person name="Qian W."/>
            <person name="Jia Y."/>
            <person name="Ren S.-X."/>
            <person name="He Y.-Q."/>
            <person name="Feng J.-X."/>
            <person name="Lu L.-F."/>
            <person name="Sun Q."/>
            <person name="Ying G."/>
            <person name="Tang D.-J."/>
            <person name="Tang H."/>
            <person name="Wu W."/>
            <person name="Hao P."/>
            <person name="Wang L."/>
            <person name="Jiang B.-L."/>
            <person name="Zeng S."/>
            <person name="Gu W.-Y."/>
            <person name="Lu G."/>
            <person name="Rong L."/>
            <person name="Tian Y."/>
            <person name="Yao Z."/>
            <person name="Fu G."/>
            <person name="Chen B."/>
            <person name="Fang R."/>
            <person name="Qiang B."/>
            <person name="Chen Z."/>
            <person name="Zhao G.-P."/>
            <person name="Tang J.-L."/>
            <person name="He C."/>
        </authorList>
    </citation>
    <scope>NUCLEOTIDE SEQUENCE [LARGE SCALE GENOMIC DNA]</scope>
    <source>
        <strain>8004</strain>
    </source>
</reference>
<protein>
    <recommendedName>
        <fullName evidence="1">dITP/XTP pyrophosphatase</fullName>
        <ecNumber evidence="1">3.6.1.66</ecNumber>
    </recommendedName>
    <alternativeName>
        <fullName evidence="1">Non-canonical purine NTP pyrophosphatase</fullName>
    </alternativeName>
    <alternativeName>
        <fullName evidence="1">Non-standard purine NTP pyrophosphatase</fullName>
    </alternativeName>
    <alternativeName>
        <fullName evidence="1">Nucleoside-triphosphate diphosphatase</fullName>
    </alternativeName>
    <alternativeName>
        <fullName evidence="1">Nucleoside-triphosphate pyrophosphatase</fullName>
        <shortName evidence="1">NTPase</shortName>
    </alternativeName>
</protein>
<name>IXTPA_XANC8</name>
<proteinExistence type="inferred from homology"/>
<keyword id="KW-0378">Hydrolase</keyword>
<keyword id="KW-0460">Magnesium</keyword>
<keyword id="KW-0479">Metal-binding</keyword>
<keyword id="KW-0546">Nucleotide metabolism</keyword>
<keyword id="KW-0547">Nucleotide-binding</keyword>
<sequence>MKHLVLASGNAGKLEELRAMLADLPLQIVAQGELGVDDVPETGLTFVENALIKARHASTVTGLPALADDSGLIVDALGGAPGLYSARYAGSPTDANANNAKLLEAMREIPAERRSARFYAVIVLLRHPEDPQPLIAEGSWEGVITTAPRGTGGFGYNPVFLDPVHGLTAAEMDTALKNRLSHRAVALATLQHKLHALSL</sequence>
<gene>
    <name type="ordered locus">XC_0962</name>
</gene>